<sequence>MKTLYSLRRFYPVETLFNGTLALAGRDQETTGFAWWAGNARLINLSGKLLGAHVAHAGLIVFWAGAMNLFEVAHFVPEKPMYEQGLILLPHLATLGWGVGPGGEVLDTFPYFVSGVLHLISSAVLGFGGIYHALLGPETLEESFPFFGYVWKDRNKMTTILGIHLILLGIGAFLLVFKALYFGGVYDTWAPGGGDVRKITNLTLSPSIVFGYLLKSPFGGEGWIVSVDDLEDIIGGHVWLGSICILGGIWHILTKPFAWARRALVWSGEAYLSYSLGALSIFGFVACCFVWFNNTAYPSEFYGPTGPEASQAQAFTFLVRDQRLGANVGSAQGPTGLGKYLMRSPTGEVIFGGETMRFWDLRAPWLEPLRGPNGLDLSRLKKDIQPWQERRSAEYMTHAPLGSLNSVGGVATEINAVNYVSPRSWLATSHFVLGFFLFVGHLWHAGRARAAAAGFEKGIDRDFEPVLSMTPLN</sequence>
<organism>
    <name type="scientific">Morus indica</name>
    <name type="common">Mulberry</name>
    <dbReference type="NCBI Taxonomy" id="248361"/>
    <lineage>
        <taxon>Eukaryota</taxon>
        <taxon>Viridiplantae</taxon>
        <taxon>Streptophyta</taxon>
        <taxon>Embryophyta</taxon>
        <taxon>Tracheophyta</taxon>
        <taxon>Spermatophyta</taxon>
        <taxon>Magnoliopsida</taxon>
        <taxon>eudicotyledons</taxon>
        <taxon>Gunneridae</taxon>
        <taxon>Pentapetalae</taxon>
        <taxon>rosids</taxon>
        <taxon>fabids</taxon>
        <taxon>Rosales</taxon>
        <taxon>Moraceae</taxon>
        <taxon>Moreae</taxon>
        <taxon>Morus</taxon>
    </lineage>
</organism>
<accession>Q09X21</accession>
<feature type="propeptide" id="PRO_0000431167" evidence="1">
    <location>
        <begin position="1"/>
        <end position="14"/>
    </location>
</feature>
<feature type="chain" id="PRO_0000361423" description="Photosystem II CP43 reaction center protein" evidence="1">
    <location>
        <begin position="15"/>
        <end position="473"/>
    </location>
</feature>
<feature type="transmembrane region" description="Helical" evidence="1">
    <location>
        <begin position="69"/>
        <end position="93"/>
    </location>
</feature>
<feature type="transmembrane region" description="Helical" evidence="1">
    <location>
        <begin position="134"/>
        <end position="155"/>
    </location>
</feature>
<feature type="transmembrane region" description="Helical" evidence="1">
    <location>
        <begin position="178"/>
        <end position="200"/>
    </location>
</feature>
<feature type="transmembrane region" description="Helical" evidence="1">
    <location>
        <begin position="255"/>
        <end position="275"/>
    </location>
</feature>
<feature type="transmembrane region" description="Helical" evidence="1">
    <location>
        <begin position="291"/>
        <end position="312"/>
    </location>
</feature>
<feature type="transmembrane region" description="Helical" evidence="1">
    <location>
        <begin position="447"/>
        <end position="471"/>
    </location>
</feature>
<feature type="binding site" evidence="1">
    <location>
        <position position="367"/>
    </location>
    <ligand>
        <name>[CaMn4O5] cluster</name>
        <dbReference type="ChEBI" id="CHEBI:189552"/>
    </ligand>
</feature>
<feature type="modified residue" description="N-acetylthreonine" evidence="1">
    <location>
        <position position="15"/>
    </location>
</feature>
<feature type="modified residue" description="Phosphothreonine" evidence="1">
    <location>
        <position position="15"/>
    </location>
</feature>
<protein>
    <recommendedName>
        <fullName evidence="1">Photosystem II CP43 reaction center protein</fullName>
    </recommendedName>
    <alternativeName>
        <fullName evidence="1">PSII 43 kDa protein</fullName>
    </alternativeName>
    <alternativeName>
        <fullName evidence="1">Protein CP-43</fullName>
    </alternativeName>
</protein>
<evidence type="ECO:0000255" key="1">
    <source>
        <dbReference type="HAMAP-Rule" id="MF_01496"/>
    </source>
</evidence>
<reference key="1">
    <citation type="submission" date="2005-09" db="EMBL/GenBank/DDBJ databases">
        <title>The chloroplast genome of mulberry: structural features and comparative analysis.</title>
        <authorList>
            <person name="Ravi V."/>
            <person name="Khurana J.P."/>
            <person name="Tyagi A.K."/>
            <person name="Khurana P."/>
        </authorList>
    </citation>
    <scope>NUCLEOTIDE SEQUENCE [LARGE SCALE GENOMIC DNA]</scope>
    <source>
        <strain>cv. K2</strain>
    </source>
</reference>
<keyword id="KW-0007">Acetylation</keyword>
<keyword id="KW-0148">Chlorophyll</keyword>
<keyword id="KW-0150">Chloroplast</keyword>
<keyword id="KW-0157">Chromophore</keyword>
<keyword id="KW-0464">Manganese</keyword>
<keyword id="KW-0472">Membrane</keyword>
<keyword id="KW-0479">Metal-binding</keyword>
<keyword id="KW-0597">Phosphoprotein</keyword>
<keyword id="KW-0602">Photosynthesis</keyword>
<keyword id="KW-0604">Photosystem II</keyword>
<keyword id="KW-0934">Plastid</keyword>
<keyword id="KW-0793">Thylakoid</keyword>
<keyword id="KW-0812">Transmembrane</keyword>
<keyword id="KW-1133">Transmembrane helix</keyword>
<dbReference type="EMBL" id="DQ226511">
    <property type="protein sequence ID" value="ABB20954.1"/>
    <property type="molecule type" value="Genomic_DNA"/>
</dbReference>
<dbReference type="RefSeq" id="YP_762257.1">
    <property type="nucleotide sequence ID" value="NC_008359.1"/>
</dbReference>
<dbReference type="SMR" id="Q09X21"/>
<dbReference type="GeneID" id="4290562"/>
<dbReference type="GO" id="GO:0009535">
    <property type="term" value="C:chloroplast thylakoid membrane"/>
    <property type="evidence" value="ECO:0007669"/>
    <property type="project" value="UniProtKB-SubCell"/>
</dbReference>
<dbReference type="GO" id="GO:0009523">
    <property type="term" value="C:photosystem II"/>
    <property type="evidence" value="ECO:0007669"/>
    <property type="project" value="UniProtKB-KW"/>
</dbReference>
<dbReference type="GO" id="GO:0016168">
    <property type="term" value="F:chlorophyll binding"/>
    <property type="evidence" value="ECO:0007669"/>
    <property type="project" value="UniProtKB-UniRule"/>
</dbReference>
<dbReference type="GO" id="GO:0045156">
    <property type="term" value="F:electron transporter, transferring electrons within the cyclic electron transport pathway of photosynthesis activity"/>
    <property type="evidence" value="ECO:0007669"/>
    <property type="project" value="InterPro"/>
</dbReference>
<dbReference type="GO" id="GO:0046872">
    <property type="term" value="F:metal ion binding"/>
    <property type="evidence" value="ECO:0007669"/>
    <property type="project" value="UniProtKB-KW"/>
</dbReference>
<dbReference type="GO" id="GO:0009772">
    <property type="term" value="P:photosynthetic electron transport in photosystem II"/>
    <property type="evidence" value="ECO:0007669"/>
    <property type="project" value="InterPro"/>
</dbReference>
<dbReference type="FunFam" id="1.10.10.670:FF:000001">
    <property type="entry name" value="Photosystem II CP43 reaction center protein"/>
    <property type="match status" value="1"/>
</dbReference>
<dbReference type="Gene3D" id="1.10.10.670">
    <property type="entry name" value="photosystem ii from thermosynechococcus elongatus"/>
    <property type="match status" value="1"/>
</dbReference>
<dbReference type="HAMAP" id="MF_01496">
    <property type="entry name" value="PSII_PsbC_CP43"/>
    <property type="match status" value="1"/>
</dbReference>
<dbReference type="InterPro" id="IPR000932">
    <property type="entry name" value="PS_antenna-like"/>
</dbReference>
<dbReference type="InterPro" id="IPR036001">
    <property type="entry name" value="PS_II_antenna-like_sf"/>
</dbReference>
<dbReference type="InterPro" id="IPR005869">
    <property type="entry name" value="PSII_PsbC"/>
</dbReference>
<dbReference type="InterPro" id="IPR044900">
    <property type="entry name" value="PSII_PsbC_sf"/>
</dbReference>
<dbReference type="NCBIfam" id="TIGR01153">
    <property type="entry name" value="psbC"/>
    <property type="match status" value="1"/>
</dbReference>
<dbReference type="Pfam" id="PF00421">
    <property type="entry name" value="PSII"/>
    <property type="match status" value="1"/>
</dbReference>
<dbReference type="SUPFAM" id="SSF161077">
    <property type="entry name" value="Photosystem II antenna protein-like"/>
    <property type="match status" value="1"/>
</dbReference>
<gene>
    <name evidence="1" type="primary">psbC</name>
    <name type="ordered locus">MoinCp017</name>
</gene>
<comment type="function">
    <text evidence="1">One of the components of the core complex of photosystem II (PSII). It binds chlorophyll and helps catalyze the primary light-induced photochemical processes of PSII. PSII is a light-driven water:plastoquinone oxidoreductase, using light energy to abstract electrons from H(2)O, generating O(2) and a proton gradient subsequently used for ATP formation.</text>
</comment>
<comment type="cofactor">
    <text evidence="1">Binds multiple chlorophylls and provides some of the ligands for the Ca-4Mn-5O cluster of the oxygen-evolving complex. It may also provide a ligand for a Cl- that is required for oxygen evolution. PSII binds additional chlorophylls, carotenoids and specific lipids.</text>
</comment>
<comment type="subunit">
    <text evidence="1">PSII is composed of 1 copy each of membrane proteins PsbA, PsbB, PsbC, PsbD, PsbE, PsbF, PsbH, PsbI, PsbJ, PsbK, PsbL, PsbM, PsbT, PsbX, PsbY, PsbZ, Psb30/Ycf12, at least 3 peripheral proteins of the oxygen-evolving complex and a large number of cofactors. It forms dimeric complexes.</text>
</comment>
<comment type="subcellular location">
    <subcellularLocation>
        <location evidence="1">Plastid</location>
        <location evidence="1">Chloroplast thylakoid membrane</location>
        <topology evidence="1">Multi-pass membrane protein</topology>
    </subcellularLocation>
</comment>
<comment type="similarity">
    <text evidence="1">Belongs to the PsbB/PsbC family. PsbC subfamily.</text>
</comment>
<name>PSBC_MORIN</name>
<geneLocation type="chloroplast"/>
<proteinExistence type="inferred from homology"/>